<keyword id="KW-0028">Amino-acid biosynthesis</keyword>
<keyword id="KW-0055">Arginine biosynthesis</keyword>
<keyword id="KW-0067">ATP-binding</keyword>
<keyword id="KW-0963">Cytoplasm</keyword>
<keyword id="KW-0418">Kinase</keyword>
<keyword id="KW-0547">Nucleotide-binding</keyword>
<keyword id="KW-0808">Transferase</keyword>
<proteinExistence type="inferred from homology"/>
<name>ARGB_CHLP8</name>
<feature type="chain" id="PRO_1000117122" description="Acetylglutamate kinase">
    <location>
        <begin position="1"/>
        <end position="301"/>
    </location>
</feature>
<feature type="binding site" evidence="1">
    <location>
        <begin position="76"/>
        <end position="77"/>
    </location>
    <ligand>
        <name>substrate</name>
    </ligand>
</feature>
<feature type="binding site" evidence="1">
    <location>
        <position position="98"/>
    </location>
    <ligand>
        <name>substrate</name>
    </ligand>
</feature>
<feature type="binding site" evidence="1">
    <location>
        <position position="192"/>
    </location>
    <ligand>
        <name>substrate</name>
    </ligand>
</feature>
<feature type="site" description="Transition state stabilizer" evidence="1">
    <location>
        <position position="41"/>
    </location>
</feature>
<feature type="site" description="Transition state stabilizer" evidence="1">
    <location>
        <position position="251"/>
    </location>
</feature>
<protein>
    <recommendedName>
        <fullName evidence="1">Acetylglutamate kinase</fullName>
        <ecNumber evidence="1">2.7.2.8</ecNumber>
    </recommendedName>
    <alternativeName>
        <fullName evidence="1">N-acetyl-L-glutamate 5-phosphotransferase</fullName>
    </alternativeName>
    <alternativeName>
        <fullName evidence="1">NAG kinase</fullName>
        <shortName evidence="1">NAGK</shortName>
    </alternativeName>
</protein>
<sequence>MEKMCSEFRPDGKRPQPVIGHVLVEALPYIRQFEGKTFVIKYGGAAMKDEVLKNIFAENVTLLRKVGIKVVIVHGGGDAITKTSDKMGLETTFVHGKRVTDLETINVVQMTLAGKVNQDIVQLINEDGGNAVGVSGLDADMIRAVPAANAETLGLVGQVAEINTRYIDLLTDAGLIPVIAPIGYDMESNVYNINADDAAAAIAVALKAEKLIYISDVEGVRVGDRILKTICKADAAEFIERGVITGGMIPKVVSAYQTLDGGVGKVHLIDGQITHALLLEVFTNEGVGTQFVVETEKEILS</sequence>
<dbReference type="EC" id="2.7.2.8" evidence="1"/>
<dbReference type="EMBL" id="CP001099">
    <property type="protein sequence ID" value="ACF11397.1"/>
    <property type="molecule type" value="Genomic_DNA"/>
</dbReference>
<dbReference type="RefSeq" id="WP_012502230.1">
    <property type="nucleotide sequence ID" value="NC_011027.1"/>
</dbReference>
<dbReference type="SMR" id="B3QN94"/>
<dbReference type="STRING" id="517417.Cpar_0989"/>
<dbReference type="KEGG" id="cpc:Cpar_0989"/>
<dbReference type="eggNOG" id="COG0548">
    <property type="taxonomic scope" value="Bacteria"/>
</dbReference>
<dbReference type="HOGENOM" id="CLU_053680_0_0_10"/>
<dbReference type="UniPathway" id="UPA00068">
    <property type="reaction ID" value="UER00107"/>
</dbReference>
<dbReference type="Proteomes" id="UP000008811">
    <property type="component" value="Chromosome"/>
</dbReference>
<dbReference type="GO" id="GO:0005737">
    <property type="term" value="C:cytoplasm"/>
    <property type="evidence" value="ECO:0007669"/>
    <property type="project" value="UniProtKB-SubCell"/>
</dbReference>
<dbReference type="GO" id="GO:0003991">
    <property type="term" value="F:acetylglutamate kinase activity"/>
    <property type="evidence" value="ECO:0007669"/>
    <property type="project" value="UniProtKB-UniRule"/>
</dbReference>
<dbReference type="GO" id="GO:0005524">
    <property type="term" value="F:ATP binding"/>
    <property type="evidence" value="ECO:0007669"/>
    <property type="project" value="UniProtKB-UniRule"/>
</dbReference>
<dbReference type="GO" id="GO:0042450">
    <property type="term" value="P:arginine biosynthetic process via ornithine"/>
    <property type="evidence" value="ECO:0007669"/>
    <property type="project" value="UniProtKB-UniRule"/>
</dbReference>
<dbReference type="GO" id="GO:0006526">
    <property type="term" value="P:L-arginine biosynthetic process"/>
    <property type="evidence" value="ECO:0007669"/>
    <property type="project" value="UniProtKB-UniPathway"/>
</dbReference>
<dbReference type="CDD" id="cd04250">
    <property type="entry name" value="AAK_NAGK-C"/>
    <property type="match status" value="1"/>
</dbReference>
<dbReference type="FunFam" id="3.40.1160.10:FF:000004">
    <property type="entry name" value="Acetylglutamate kinase"/>
    <property type="match status" value="1"/>
</dbReference>
<dbReference type="Gene3D" id="3.40.1160.10">
    <property type="entry name" value="Acetylglutamate kinase-like"/>
    <property type="match status" value="1"/>
</dbReference>
<dbReference type="HAMAP" id="MF_00082">
    <property type="entry name" value="ArgB"/>
    <property type="match status" value="1"/>
</dbReference>
<dbReference type="InterPro" id="IPR036393">
    <property type="entry name" value="AceGlu_kinase-like_sf"/>
</dbReference>
<dbReference type="InterPro" id="IPR004662">
    <property type="entry name" value="AcgluKinase_fam"/>
</dbReference>
<dbReference type="InterPro" id="IPR037528">
    <property type="entry name" value="ArgB"/>
</dbReference>
<dbReference type="InterPro" id="IPR001048">
    <property type="entry name" value="Asp/Glu/Uridylate_kinase"/>
</dbReference>
<dbReference type="InterPro" id="IPR001057">
    <property type="entry name" value="Glu/AcGlu_kinase"/>
</dbReference>
<dbReference type="InterPro" id="IPR041727">
    <property type="entry name" value="NAGK-C"/>
</dbReference>
<dbReference type="NCBIfam" id="TIGR00761">
    <property type="entry name" value="argB"/>
    <property type="match status" value="1"/>
</dbReference>
<dbReference type="PANTHER" id="PTHR23342">
    <property type="entry name" value="N-ACETYLGLUTAMATE SYNTHASE"/>
    <property type="match status" value="1"/>
</dbReference>
<dbReference type="PANTHER" id="PTHR23342:SF0">
    <property type="entry name" value="N-ACETYLGLUTAMATE SYNTHASE, MITOCHONDRIAL"/>
    <property type="match status" value="1"/>
</dbReference>
<dbReference type="Pfam" id="PF00696">
    <property type="entry name" value="AA_kinase"/>
    <property type="match status" value="1"/>
</dbReference>
<dbReference type="PIRSF" id="PIRSF000728">
    <property type="entry name" value="NAGK"/>
    <property type="match status" value="1"/>
</dbReference>
<dbReference type="PRINTS" id="PR00474">
    <property type="entry name" value="GLU5KINASE"/>
</dbReference>
<dbReference type="SUPFAM" id="SSF53633">
    <property type="entry name" value="Carbamate kinase-like"/>
    <property type="match status" value="1"/>
</dbReference>
<accession>B3QN94</accession>
<evidence type="ECO:0000255" key="1">
    <source>
        <dbReference type="HAMAP-Rule" id="MF_00082"/>
    </source>
</evidence>
<reference key="1">
    <citation type="submission" date="2008-06" db="EMBL/GenBank/DDBJ databases">
        <title>Complete sequence of Chlorobaculum parvum NCIB 8327.</title>
        <authorList>
            <consortium name="US DOE Joint Genome Institute"/>
            <person name="Lucas S."/>
            <person name="Copeland A."/>
            <person name="Lapidus A."/>
            <person name="Glavina del Rio T."/>
            <person name="Dalin E."/>
            <person name="Tice H."/>
            <person name="Bruce D."/>
            <person name="Goodwin L."/>
            <person name="Pitluck S."/>
            <person name="Schmutz J."/>
            <person name="Larimer F."/>
            <person name="Land M."/>
            <person name="Hauser L."/>
            <person name="Kyrpides N."/>
            <person name="Mikhailova N."/>
            <person name="Zhao F."/>
            <person name="Li T."/>
            <person name="Liu Z."/>
            <person name="Overmann J."/>
            <person name="Bryant D.A."/>
            <person name="Richardson P."/>
        </authorList>
    </citation>
    <scope>NUCLEOTIDE SEQUENCE [LARGE SCALE GENOMIC DNA]</scope>
    <source>
        <strain>DSM 263 / NCIMB 8327</strain>
    </source>
</reference>
<gene>
    <name evidence="1" type="primary">argB</name>
    <name type="ordered locus">Cpar_0989</name>
</gene>
<comment type="function">
    <text evidence="1">Catalyzes the ATP-dependent phosphorylation of N-acetyl-L-glutamate.</text>
</comment>
<comment type="catalytic activity">
    <reaction evidence="1">
        <text>N-acetyl-L-glutamate + ATP = N-acetyl-L-glutamyl 5-phosphate + ADP</text>
        <dbReference type="Rhea" id="RHEA:14629"/>
        <dbReference type="ChEBI" id="CHEBI:30616"/>
        <dbReference type="ChEBI" id="CHEBI:44337"/>
        <dbReference type="ChEBI" id="CHEBI:57936"/>
        <dbReference type="ChEBI" id="CHEBI:456216"/>
        <dbReference type="EC" id="2.7.2.8"/>
    </reaction>
</comment>
<comment type="pathway">
    <text evidence="1">Amino-acid biosynthesis; L-arginine biosynthesis; N(2)-acetyl-L-ornithine from L-glutamate: step 2/4.</text>
</comment>
<comment type="subcellular location">
    <subcellularLocation>
        <location evidence="1">Cytoplasm</location>
    </subcellularLocation>
</comment>
<comment type="similarity">
    <text evidence="1">Belongs to the acetylglutamate kinase family. ArgB subfamily.</text>
</comment>
<organism>
    <name type="scientific">Chlorobaculum parvum (strain DSM 263 / NCIMB 8327)</name>
    <name type="common">Chlorobium vibrioforme subsp. thiosulfatophilum</name>
    <dbReference type="NCBI Taxonomy" id="517417"/>
    <lineage>
        <taxon>Bacteria</taxon>
        <taxon>Pseudomonadati</taxon>
        <taxon>Chlorobiota</taxon>
        <taxon>Chlorobiia</taxon>
        <taxon>Chlorobiales</taxon>
        <taxon>Chlorobiaceae</taxon>
        <taxon>Chlorobaculum</taxon>
    </lineage>
</organism>